<protein>
    <recommendedName>
        <fullName evidence="1">Phosphatidylserine decarboxylase proenzyme</fullName>
        <ecNumber evidence="1">4.1.1.65</ecNumber>
    </recommendedName>
    <component>
        <recommendedName>
            <fullName evidence="1">Phosphatidylserine decarboxylase alpha chain</fullName>
        </recommendedName>
    </component>
    <component>
        <recommendedName>
            <fullName evidence="1">Phosphatidylserine decarboxylase beta chain</fullName>
        </recommendedName>
    </component>
</protein>
<proteinExistence type="inferred from homology"/>
<comment type="function">
    <text evidence="1">Catalyzes the formation of phosphatidylethanolamine (PtdEtn) from phosphatidylserine (PtdSer).</text>
</comment>
<comment type="catalytic activity">
    <reaction evidence="1">
        <text>a 1,2-diacyl-sn-glycero-3-phospho-L-serine + H(+) = a 1,2-diacyl-sn-glycero-3-phosphoethanolamine + CO2</text>
        <dbReference type="Rhea" id="RHEA:20828"/>
        <dbReference type="ChEBI" id="CHEBI:15378"/>
        <dbReference type="ChEBI" id="CHEBI:16526"/>
        <dbReference type="ChEBI" id="CHEBI:57262"/>
        <dbReference type="ChEBI" id="CHEBI:64612"/>
        <dbReference type="EC" id="4.1.1.65"/>
    </reaction>
</comment>
<comment type="cofactor">
    <cofactor evidence="1">
        <name>pyruvate</name>
        <dbReference type="ChEBI" id="CHEBI:15361"/>
    </cofactor>
    <text evidence="1">Binds 1 pyruvoyl group covalently per subunit.</text>
</comment>
<comment type="pathway">
    <text evidence="1">Phospholipid metabolism; phosphatidylethanolamine biosynthesis; phosphatidylethanolamine from CDP-diacylglycerol: step 2/2.</text>
</comment>
<comment type="subunit">
    <text evidence="1">Heterodimer of a large membrane-associated beta subunit and a small pyruvoyl-containing alpha subunit.</text>
</comment>
<comment type="subcellular location">
    <subcellularLocation>
        <location evidence="1">Cell membrane</location>
        <topology evidence="1">Peripheral membrane protein</topology>
    </subcellularLocation>
</comment>
<comment type="PTM">
    <text evidence="1">Is synthesized initially as an inactive proenzyme. Formation of the active enzyme involves a self-maturation process in which the active site pyruvoyl group is generated from an internal serine residue via an autocatalytic post-translational modification. Two non-identical subunits are generated from the proenzyme in this reaction, and the pyruvate is formed at the N-terminus of the alpha chain, which is derived from the carboxyl end of the proenzyme. The autoendoproteolytic cleavage occurs by a canonical serine protease mechanism, in which the side chain hydroxyl group of the serine supplies its oxygen atom to form the C-terminus of the beta chain, while the remainder of the serine residue undergoes an oxidative deamination to produce ammonia and the pyruvoyl prosthetic group on the alpha chain. During this reaction, the Ser that is part of the protease active site of the proenzyme becomes the pyruvoyl prosthetic group, which constitutes an essential element of the active site of the mature decarboxylase.</text>
</comment>
<comment type="similarity">
    <text evidence="1">Belongs to the phosphatidylserine decarboxylase family. PSD-B subfamily. Prokaryotic type I sub-subfamily.</text>
</comment>
<name>PSD_ECOLC</name>
<gene>
    <name evidence="1" type="primary">psd</name>
    <name type="ordered locus">EcolC_3850</name>
</gene>
<reference key="1">
    <citation type="submission" date="2008-02" db="EMBL/GenBank/DDBJ databases">
        <title>Complete sequence of Escherichia coli C str. ATCC 8739.</title>
        <authorList>
            <person name="Copeland A."/>
            <person name="Lucas S."/>
            <person name="Lapidus A."/>
            <person name="Glavina del Rio T."/>
            <person name="Dalin E."/>
            <person name="Tice H."/>
            <person name="Bruce D."/>
            <person name="Goodwin L."/>
            <person name="Pitluck S."/>
            <person name="Kiss H."/>
            <person name="Brettin T."/>
            <person name="Detter J.C."/>
            <person name="Han C."/>
            <person name="Kuske C.R."/>
            <person name="Schmutz J."/>
            <person name="Larimer F."/>
            <person name="Land M."/>
            <person name="Hauser L."/>
            <person name="Kyrpides N."/>
            <person name="Mikhailova N."/>
            <person name="Ingram L."/>
            <person name="Richardson P."/>
        </authorList>
    </citation>
    <scope>NUCLEOTIDE SEQUENCE [LARGE SCALE GENOMIC DNA]</scope>
    <source>
        <strain>ATCC 8739 / DSM 1576 / NBRC 3972 / NCIMB 8545 / WDCM 00012 / Crooks</strain>
    </source>
</reference>
<accession>B1IT43</accession>
<evidence type="ECO:0000255" key="1">
    <source>
        <dbReference type="HAMAP-Rule" id="MF_00662"/>
    </source>
</evidence>
<evidence type="ECO:0000256" key="2">
    <source>
        <dbReference type="SAM" id="MobiDB-lite"/>
    </source>
</evidence>
<organism>
    <name type="scientific">Escherichia coli (strain ATCC 8739 / DSM 1576 / NBRC 3972 / NCIMB 8545 / WDCM 00012 / Crooks)</name>
    <dbReference type="NCBI Taxonomy" id="481805"/>
    <lineage>
        <taxon>Bacteria</taxon>
        <taxon>Pseudomonadati</taxon>
        <taxon>Pseudomonadota</taxon>
        <taxon>Gammaproteobacteria</taxon>
        <taxon>Enterobacterales</taxon>
        <taxon>Enterobacteriaceae</taxon>
        <taxon>Escherichia</taxon>
    </lineage>
</organism>
<feature type="chain" id="PRO_1000082890" description="Phosphatidylserine decarboxylase beta chain" evidence="1">
    <location>
        <begin position="1"/>
        <end position="253"/>
    </location>
</feature>
<feature type="chain" id="PRO_1000082891" description="Phosphatidylserine decarboxylase alpha chain" evidence="1">
    <location>
        <begin position="254"/>
        <end position="322"/>
    </location>
</feature>
<feature type="region of interest" description="Disordered" evidence="2">
    <location>
        <begin position="293"/>
        <end position="322"/>
    </location>
</feature>
<feature type="compositionally biased region" description="Basic and acidic residues" evidence="2">
    <location>
        <begin position="308"/>
        <end position="322"/>
    </location>
</feature>
<feature type="active site" description="Charge relay system; for autoendoproteolytic cleavage activity" evidence="1">
    <location>
        <position position="90"/>
    </location>
</feature>
<feature type="active site" description="Charge relay system; for autoendoproteolytic cleavage activity" evidence="1">
    <location>
        <position position="147"/>
    </location>
</feature>
<feature type="active site" description="Charge relay system; for autoendoproteolytic cleavage activity" evidence="1">
    <location>
        <position position="254"/>
    </location>
</feature>
<feature type="active site" description="Schiff-base intermediate with substrate; via pyruvic acid; for decarboxylase activity" evidence="1">
    <location>
        <position position="254"/>
    </location>
</feature>
<feature type="site" description="Cleavage (non-hydrolytic); by autocatalysis" evidence="1">
    <location>
        <begin position="253"/>
        <end position="254"/>
    </location>
</feature>
<feature type="modified residue" description="Pyruvic acid (Ser); by autocatalysis" evidence="1">
    <location>
        <position position="254"/>
    </location>
</feature>
<sequence length="322" mass="35934">MLNSFKLSLQYILPKLWLTRLAGWGASKRAGWLTKLVIDLFVKYYKVDMKEAQKPDTASYRTFNEFFVRPLRDEVRPIDTDPNVLVMPADGVISQLGKIEEDKILQAKGHNYSLEALLAGNYLMADLFRNGTFVTTYLSPRDYHRVHMPCNGILREMIYVPGDLFSVNHLTAQNVPNLFARNERVICLFDTEFGPMAQILVGATIVGSIETVWAGTITPPREGIIKRWTWPAGENDGSVALLKGQEMGRFKLGSTVINLFAPGKVNLVEQLESLSVTKIGQPLAVSTETFVTPDAEPAPLPAEEIEAEHDASPLVDDKKDQV</sequence>
<dbReference type="EC" id="4.1.1.65" evidence="1"/>
<dbReference type="EMBL" id="CP000946">
    <property type="protein sequence ID" value="ACA79454.1"/>
    <property type="molecule type" value="Genomic_DNA"/>
</dbReference>
<dbReference type="SMR" id="B1IT43"/>
<dbReference type="KEGG" id="ecl:EcolC_3850"/>
<dbReference type="HOGENOM" id="CLU_029061_4_1_6"/>
<dbReference type="UniPathway" id="UPA00558">
    <property type="reaction ID" value="UER00616"/>
</dbReference>
<dbReference type="GO" id="GO:0005886">
    <property type="term" value="C:plasma membrane"/>
    <property type="evidence" value="ECO:0007669"/>
    <property type="project" value="UniProtKB-SubCell"/>
</dbReference>
<dbReference type="GO" id="GO:0004609">
    <property type="term" value="F:phosphatidylserine decarboxylase activity"/>
    <property type="evidence" value="ECO:0007669"/>
    <property type="project" value="UniProtKB-UniRule"/>
</dbReference>
<dbReference type="GO" id="GO:0006646">
    <property type="term" value="P:phosphatidylethanolamine biosynthetic process"/>
    <property type="evidence" value="ECO:0007669"/>
    <property type="project" value="UniProtKB-UniRule"/>
</dbReference>
<dbReference type="HAMAP" id="MF_00662">
    <property type="entry name" value="PS_decarb_PSD_B_type1"/>
    <property type="match status" value="1"/>
</dbReference>
<dbReference type="InterPro" id="IPR003817">
    <property type="entry name" value="PS_Dcarbxylase"/>
</dbReference>
<dbReference type="InterPro" id="IPR033177">
    <property type="entry name" value="PSD-B"/>
</dbReference>
<dbReference type="InterPro" id="IPR033178">
    <property type="entry name" value="PSD_type1_pro"/>
</dbReference>
<dbReference type="NCBIfam" id="TIGR00163">
    <property type="entry name" value="PS_decarb"/>
    <property type="match status" value="1"/>
</dbReference>
<dbReference type="PANTHER" id="PTHR10067">
    <property type="entry name" value="PHOSPHATIDYLSERINE DECARBOXYLASE"/>
    <property type="match status" value="1"/>
</dbReference>
<dbReference type="PANTHER" id="PTHR10067:SF6">
    <property type="entry name" value="PHOSPHATIDYLSERINE DECARBOXYLASE PROENZYME, MITOCHONDRIAL"/>
    <property type="match status" value="1"/>
</dbReference>
<dbReference type="Pfam" id="PF02666">
    <property type="entry name" value="PS_Dcarbxylase"/>
    <property type="match status" value="1"/>
</dbReference>
<keyword id="KW-1003">Cell membrane</keyword>
<keyword id="KW-0210">Decarboxylase</keyword>
<keyword id="KW-0444">Lipid biosynthesis</keyword>
<keyword id="KW-0443">Lipid metabolism</keyword>
<keyword id="KW-0456">Lyase</keyword>
<keyword id="KW-0472">Membrane</keyword>
<keyword id="KW-0594">Phospholipid biosynthesis</keyword>
<keyword id="KW-1208">Phospholipid metabolism</keyword>
<keyword id="KW-0670">Pyruvate</keyword>
<keyword id="KW-0865">Zymogen</keyword>